<gene>
    <name evidence="1" type="primary">coaD</name>
    <name type="ordered locus">APJL_1152</name>
</gene>
<feature type="chain" id="PRO_1000096756" description="Phosphopantetheine adenylyltransferase">
    <location>
        <begin position="1"/>
        <end position="158"/>
    </location>
</feature>
<feature type="binding site" evidence="1">
    <location>
        <begin position="10"/>
        <end position="11"/>
    </location>
    <ligand>
        <name>ATP</name>
        <dbReference type="ChEBI" id="CHEBI:30616"/>
    </ligand>
</feature>
<feature type="binding site" evidence="1">
    <location>
        <position position="10"/>
    </location>
    <ligand>
        <name>substrate</name>
    </ligand>
</feature>
<feature type="binding site" evidence="1">
    <location>
        <position position="18"/>
    </location>
    <ligand>
        <name>ATP</name>
        <dbReference type="ChEBI" id="CHEBI:30616"/>
    </ligand>
</feature>
<feature type="binding site" evidence="1">
    <location>
        <position position="42"/>
    </location>
    <ligand>
        <name>substrate</name>
    </ligand>
</feature>
<feature type="binding site" evidence="1">
    <location>
        <position position="74"/>
    </location>
    <ligand>
        <name>substrate</name>
    </ligand>
</feature>
<feature type="binding site" evidence="1">
    <location>
        <position position="88"/>
    </location>
    <ligand>
        <name>substrate</name>
    </ligand>
</feature>
<feature type="binding site" evidence="1">
    <location>
        <begin position="89"/>
        <end position="91"/>
    </location>
    <ligand>
        <name>ATP</name>
        <dbReference type="ChEBI" id="CHEBI:30616"/>
    </ligand>
</feature>
<feature type="binding site" evidence="1">
    <location>
        <position position="99"/>
    </location>
    <ligand>
        <name>ATP</name>
        <dbReference type="ChEBI" id="CHEBI:30616"/>
    </ligand>
</feature>
<feature type="binding site" evidence="1">
    <location>
        <begin position="124"/>
        <end position="130"/>
    </location>
    <ligand>
        <name>ATP</name>
        <dbReference type="ChEBI" id="CHEBI:30616"/>
    </ligand>
</feature>
<feature type="site" description="Transition state stabilizer" evidence="1">
    <location>
        <position position="18"/>
    </location>
</feature>
<protein>
    <recommendedName>
        <fullName evidence="1">Phosphopantetheine adenylyltransferase</fullName>
        <ecNumber evidence="1">2.7.7.3</ecNumber>
    </recommendedName>
    <alternativeName>
        <fullName evidence="1">Dephospho-CoA pyrophosphorylase</fullName>
    </alternativeName>
    <alternativeName>
        <fullName evidence="1">Pantetheine-phosphate adenylyltransferase</fullName>
        <shortName evidence="1">PPAT</shortName>
    </alternativeName>
</protein>
<name>COAD_ACTPJ</name>
<organism>
    <name type="scientific">Actinobacillus pleuropneumoniae serotype 3 (strain JL03)</name>
    <dbReference type="NCBI Taxonomy" id="434271"/>
    <lineage>
        <taxon>Bacteria</taxon>
        <taxon>Pseudomonadati</taxon>
        <taxon>Pseudomonadota</taxon>
        <taxon>Gammaproteobacteria</taxon>
        <taxon>Pasteurellales</taxon>
        <taxon>Pasteurellaceae</taxon>
        <taxon>Actinobacillus</taxon>
    </lineage>
</organism>
<keyword id="KW-0067">ATP-binding</keyword>
<keyword id="KW-0173">Coenzyme A biosynthesis</keyword>
<keyword id="KW-0963">Cytoplasm</keyword>
<keyword id="KW-0460">Magnesium</keyword>
<keyword id="KW-0547">Nucleotide-binding</keyword>
<keyword id="KW-0548">Nucleotidyltransferase</keyword>
<keyword id="KW-0808">Transferase</keyword>
<evidence type="ECO:0000255" key="1">
    <source>
        <dbReference type="HAMAP-Rule" id="MF_00151"/>
    </source>
</evidence>
<dbReference type="EC" id="2.7.7.3" evidence="1"/>
<dbReference type="EMBL" id="CP000687">
    <property type="protein sequence ID" value="ABY69708.1"/>
    <property type="molecule type" value="Genomic_DNA"/>
</dbReference>
<dbReference type="RefSeq" id="WP_005598022.1">
    <property type="nucleotide sequence ID" value="NC_010278.1"/>
</dbReference>
<dbReference type="SMR" id="B0BQ73"/>
<dbReference type="GeneID" id="48599365"/>
<dbReference type="KEGG" id="apj:APJL_1152"/>
<dbReference type="HOGENOM" id="CLU_100149_0_1_6"/>
<dbReference type="UniPathway" id="UPA00241">
    <property type="reaction ID" value="UER00355"/>
</dbReference>
<dbReference type="Proteomes" id="UP000008547">
    <property type="component" value="Chromosome"/>
</dbReference>
<dbReference type="GO" id="GO:0005737">
    <property type="term" value="C:cytoplasm"/>
    <property type="evidence" value="ECO:0007669"/>
    <property type="project" value="UniProtKB-SubCell"/>
</dbReference>
<dbReference type="GO" id="GO:0005524">
    <property type="term" value="F:ATP binding"/>
    <property type="evidence" value="ECO:0007669"/>
    <property type="project" value="UniProtKB-KW"/>
</dbReference>
<dbReference type="GO" id="GO:0004595">
    <property type="term" value="F:pantetheine-phosphate adenylyltransferase activity"/>
    <property type="evidence" value="ECO:0007669"/>
    <property type="project" value="UniProtKB-UniRule"/>
</dbReference>
<dbReference type="GO" id="GO:0015937">
    <property type="term" value="P:coenzyme A biosynthetic process"/>
    <property type="evidence" value="ECO:0007669"/>
    <property type="project" value="UniProtKB-UniRule"/>
</dbReference>
<dbReference type="CDD" id="cd02163">
    <property type="entry name" value="PPAT"/>
    <property type="match status" value="1"/>
</dbReference>
<dbReference type="Gene3D" id="3.40.50.620">
    <property type="entry name" value="HUPs"/>
    <property type="match status" value="1"/>
</dbReference>
<dbReference type="HAMAP" id="MF_00151">
    <property type="entry name" value="PPAT_bact"/>
    <property type="match status" value="1"/>
</dbReference>
<dbReference type="InterPro" id="IPR004821">
    <property type="entry name" value="Cyt_trans-like"/>
</dbReference>
<dbReference type="InterPro" id="IPR001980">
    <property type="entry name" value="PPAT"/>
</dbReference>
<dbReference type="InterPro" id="IPR014729">
    <property type="entry name" value="Rossmann-like_a/b/a_fold"/>
</dbReference>
<dbReference type="NCBIfam" id="TIGR01510">
    <property type="entry name" value="coaD_prev_kdtB"/>
    <property type="match status" value="1"/>
</dbReference>
<dbReference type="NCBIfam" id="TIGR00125">
    <property type="entry name" value="cyt_tran_rel"/>
    <property type="match status" value="1"/>
</dbReference>
<dbReference type="PANTHER" id="PTHR21342">
    <property type="entry name" value="PHOSPHOPANTETHEINE ADENYLYLTRANSFERASE"/>
    <property type="match status" value="1"/>
</dbReference>
<dbReference type="PANTHER" id="PTHR21342:SF1">
    <property type="entry name" value="PHOSPHOPANTETHEINE ADENYLYLTRANSFERASE"/>
    <property type="match status" value="1"/>
</dbReference>
<dbReference type="Pfam" id="PF01467">
    <property type="entry name" value="CTP_transf_like"/>
    <property type="match status" value="1"/>
</dbReference>
<dbReference type="PRINTS" id="PR01020">
    <property type="entry name" value="LPSBIOSNTHSS"/>
</dbReference>
<dbReference type="SUPFAM" id="SSF52374">
    <property type="entry name" value="Nucleotidylyl transferase"/>
    <property type="match status" value="1"/>
</dbReference>
<accession>B0BQ73</accession>
<proteinExistence type="inferred from homology"/>
<reference key="1">
    <citation type="journal article" date="2008" name="PLoS ONE">
        <title>Genome biology of Actinobacillus pleuropneumoniae JL03, an isolate of serotype 3 prevalent in China.</title>
        <authorList>
            <person name="Xu Z."/>
            <person name="Zhou Y."/>
            <person name="Li L."/>
            <person name="Zhou R."/>
            <person name="Xiao S."/>
            <person name="Wan Y."/>
            <person name="Zhang S."/>
            <person name="Wang K."/>
            <person name="Li W."/>
            <person name="Li L."/>
            <person name="Jin H."/>
            <person name="Kang M."/>
            <person name="Dalai B."/>
            <person name="Li T."/>
            <person name="Liu L."/>
            <person name="Cheng Y."/>
            <person name="Zhang L."/>
            <person name="Xu T."/>
            <person name="Zheng H."/>
            <person name="Pu S."/>
            <person name="Wang B."/>
            <person name="Gu W."/>
            <person name="Zhang X.L."/>
            <person name="Zhu G.-F."/>
            <person name="Wang S."/>
            <person name="Zhao G.-P."/>
            <person name="Chen H."/>
        </authorList>
    </citation>
    <scope>NUCLEOTIDE SEQUENCE [LARGE SCALE GENOMIC DNA]</scope>
    <source>
        <strain>JL03</strain>
    </source>
</reference>
<sequence length="158" mass="17552">MSYTVIYAGTFDPMTNGHLDIIERASELFGQVIVAVAKNPSKQPLFSLEERTALVRQSCAHLANVQAVGFSGLLADFAKQHQAKALVRGIRGSDDIEYEIQLAQLNDKLSGRLDTVFLPPSVTWRYLSSTMVREIYRHQGDVAQFVPNAVLCALKEKE</sequence>
<comment type="function">
    <text evidence="1">Reversibly transfers an adenylyl group from ATP to 4'-phosphopantetheine, yielding dephospho-CoA (dPCoA) and pyrophosphate.</text>
</comment>
<comment type="catalytic activity">
    <reaction evidence="1">
        <text>(R)-4'-phosphopantetheine + ATP + H(+) = 3'-dephospho-CoA + diphosphate</text>
        <dbReference type="Rhea" id="RHEA:19801"/>
        <dbReference type="ChEBI" id="CHEBI:15378"/>
        <dbReference type="ChEBI" id="CHEBI:30616"/>
        <dbReference type="ChEBI" id="CHEBI:33019"/>
        <dbReference type="ChEBI" id="CHEBI:57328"/>
        <dbReference type="ChEBI" id="CHEBI:61723"/>
        <dbReference type="EC" id="2.7.7.3"/>
    </reaction>
</comment>
<comment type="cofactor">
    <cofactor evidence="1">
        <name>Mg(2+)</name>
        <dbReference type="ChEBI" id="CHEBI:18420"/>
    </cofactor>
</comment>
<comment type="pathway">
    <text evidence="1">Cofactor biosynthesis; coenzyme A biosynthesis; CoA from (R)-pantothenate: step 4/5.</text>
</comment>
<comment type="subunit">
    <text evidence="1">Homohexamer.</text>
</comment>
<comment type="subcellular location">
    <subcellularLocation>
        <location evidence="1">Cytoplasm</location>
    </subcellularLocation>
</comment>
<comment type="similarity">
    <text evidence="1">Belongs to the bacterial CoaD family.</text>
</comment>